<feature type="chain" id="PRO_1000193924" description="Large ribosomal subunit protein bL19">
    <location>
        <begin position="1"/>
        <end position="136"/>
    </location>
</feature>
<proteinExistence type="inferred from homology"/>
<keyword id="KW-0687">Ribonucleoprotein</keyword>
<keyword id="KW-0689">Ribosomal protein</keyword>
<organism>
    <name type="scientific">Xylella fastidiosa (strain M23)</name>
    <dbReference type="NCBI Taxonomy" id="405441"/>
    <lineage>
        <taxon>Bacteria</taxon>
        <taxon>Pseudomonadati</taxon>
        <taxon>Pseudomonadota</taxon>
        <taxon>Gammaproteobacteria</taxon>
        <taxon>Lysobacterales</taxon>
        <taxon>Lysobacteraceae</taxon>
        <taxon>Xylella</taxon>
    </lineage>
</organism>
<reference key="1">
    <citation type="journal article" date="2010" name="J. Bacteriol.">
        <title>Whole genome sequences of two Xylella fastidiosa strains (M12 and M23) causing almond leaf scorch disease in California.</title>
        <authorList>
            <person name="Chen J."/>
            <person name="Xie G."/>
            <person name="Han S."/>
            <person name="Chertkov O."/>
            <person name="Sims D."/>
            <person name="Civerolo E.L."/>
        </authorList>
    </citation>
    <scope>NUCLEOTIDE SEQUENCE [LARGE SCALE GENOMIC DNA]</scope>
    <source>
        <strain>M23</strain>
    </source>
</reference>
<accession>B2I6A9</accession>
<name>RL19_XYLF2</name>
<protein>
    <recommendedName>
        <fullName evidence="1">Large ribosomal subunit protein bL19</fullName>
    </recommendedName>
    <alternativeName>
        <fullName evidence="2">50S ribosomal protein L19</fullName>
    </alternativeName>
</protein>
<gene>
    <name evidence="1" type="primary">rplS</name>
    <name type="ordered locus">XfasM23_0076</name>
</gene>
<comment type="function">
    <text evidence="1">This protein is located at the 30S-50S ribosomal subunit interface and may play a role in the structure and function of the aminoacyl-tRNA binding site.</text>
</comment>
<comment type="similarity">
    <text evidence="1">Belongs to the bacterial ribosomal protein bL19 family.</text>
</comment>
<evidence type="ECO:0000255" key="1">
    <source>
        <dbReference type="HAMAP-Rule" id="MF_00402"/>
    </source>
</evidence>
<evidence type="ECO:0000305" key="2"/>
<sequence length="136" mass="15051">MSKLNKSIIAEFESAQITRQVPQFSQGDTIVVNVKVKEGNRERLQAYEGVVIATKNAGLNSAFTVRKISHGYGVERVFQTHSPIIESIEIKRRGKVRAAKLYYLRGLEGKAARIKEDLAATAHEKLARKTVTAKAG</sequence>
<dbReference type="EMBL" id="CP001011">
    <property type="protein sequence ID" value="ACB91533.1"/>
    <property type="molecule type" value="Genomic_DNA"/>
</dbReference>
<dbReference type="RefSeq" id="WP_004085540.1">
    <property type="nucleotide sequence ID" value="NC_010577.1"/>
</dbReference>
<dbReference type="SMR" id="B2I6A9"/>
<dbReference type="GeneID" id="93903775"/>
<dbReference type="KEGG" id="xfn:XfasM23_0076"/>
<dbReference type="HOGENOM" id="CLU_103507_2_1_6"/>
<dbReference type="Proteomes" id="UP000001698">
    <property type="component" value="Chromosome"/>
</dbReference>
<dbReference type="GO" id="GO:0022625">
    <property type="term" value="C:cytosolic large ribosomal subunit"/>
    <property type="evidence" value="ECO:0007669"/>
    <property type="project" value="TreeGrafter"/>
</dbReference>
<dbReference type="GO" id="GO:0003735">
    <property type="term" value="F:structural constituent of ribosome"/>
    <property type="evidence" value="ECO:0007669"/>
    <property type="project" value="InterPro"/>
</dbReference>
<dbReference type="GO" id="GO:0006412">
    <property type="term" value="P:translation"/>
    <property type="evidence" value="ECO:0007669"/>
    <property type="project" value="UniProtKB-UniRule"/>
</dbReference>
<dbReference type="FunFam" id="2.30.30.790:FF:000001">
    <property type="entry name" value="50S ribosomal protein L19"/>
    <property type="match status" value="1"/>
</dbReference>
<dbReference type="Gene3D" id="2.30.30.790">
    <property type="match status" value="1"/>
</dbReference>
<dbReference type="HAMAP" id="MF_00402">
    <property type="entry name" value="Ribosomal_bL19"/>
    <property type="match status" value="1"/>
</dbReference>
<dbReference type="InterPro" id="IPR001857">
    <property type="entry name" value="Ribosomal_bL19"/>
</dbReference>
<dbReference type="InterPro" id="IPR018257">
    <property type="entry name" value="Ribosomal_bL19_CS"/>
</dbReference>
<dbReference type="InterPro" id="IPR038657">
    <property type="entry name" value="Ribosomal_bL19_sf"/>
</dbReference>
<dbReference type="InterPro" id="IPR008991">
    <property type="entry name" value="Translation_prot_SH3-like_sf"/>
</dbReference>
<dbReference type="NCBIfam" id="TIGR01024">
    <property type="entry name" value="rplS_bact"/>
    <property type="match status" value="1"/>
</dbReference>
<dbReference type="PANTHER" id="PTHR15680:SF9">
    <property type="entry name" value="LARGE RIBOSOMAL SUBUNIT PROTEIN BL19M"/>
    <property type="match status" value="1"/>
</dbReference>
<dbReference type="PANTHER" id="PTHR15680">
    <property type="entry name" value="RIBOSOMAL PROTEIN L19"/>
    <property type="match status" value="1"/>
</dbReference>
<dbReference type="Pfam" id="PF01245">
    <property type="entry name" value="Ribosomal_L19"/>
    <property type="match status" value="1"/>
</dbReference>
<dbReference type="PIRSF" id="PIRSF002191">
    <property type="entry name" value="Ribosomal_L19"/>
    <property type="match status" value="1"/>
</dbReference>
<dbReference type="PRINTS" id="PR00061">
    <property type="entry name" value="RIBOSOMALL19"/>
</dbReference>
<dbReference type="SUPFAM" id="SSF50104">
    <property type="entry name" value="Translation proteins SH3-like domain"/>
    <property type="match status" value="1"/>
</dbReference>
<dbReference type="PROSITE" id="PS01015">
    <property type="entry name" value="RIBOSOMAL_L19"/>
    <property type="match status" value="1"/>
</dbReference>